<dbReference type="EC" id="2.1.2.3" evidence="1"/>
<dbReference type="EC" id="3.5.4.10" evidence="1"/>
<dbReference type="EMBL" id="CP000408">
    <property type="protein sequence ID" value="ABP91194.1"/>
    <property type="molecule type" value="Genomic_DNA"/>
</dbReference>
<dbReference type="SMR" id="A4VYK5"/>
<dbReference type="KEGG" id="ssv:SSU98_0034"/>
<dbReference type="HOGENOM" id="CLU_016316_5_2_9"/>
<dbReference type="UniPathway" id="UPA00074">
    <property type="reaction ID" value="UER00133"/>
</dbReference>
<dbReference type="UniPathway" id="UPA00074">
    <property type="reaction ID" value="UER00135"/>
</dbReference>
<dbReference type="GO" id="GO:0005829">
    <property type="term" value="C:cytosol"/>
    <property type="evidence" value="ECO:0007669"/>
    <property type="project" value="TreeGrafter"/>
</dbReference>
<dbReference type="GO" id="GO:0003937">
    <property type="term" value="F:IMP cyclohydrolase activity"/>
    <property type="evidence" value="ECO:0007669"/>
    <property type="project" value="UniProtKB-UniRule"/>
</dbReference>
<dbReference type="GO" id="GO:0004643">
    <property type="term" value="F:phosphoribosylaminoimidazolecarboxamide formyltransferase activity"/>
    <property type="evidence" value="ECO:0007669"/>
    <property type="project" value="UniProtKB-UniRule"/>
</dbReference>
<dbReference type="GO" id="GO:0006189">
    <property type="term" value="P:'de novo' IMP biosynthetic process"/>
    <property type="evidence" value="ECO:0007669"/>
    <property type="project" value="UniProtKB-UniRule"/>
</dbReference>
<dbReference type="CDD" id="cd01421">
    <property type="entry name" value="IMPCH"/>
    <property type="match status" value="1"/>
</dbReference>
<dbReference type="FunFam" id="3.40.140.20:FF:000001">
    <property type="entry name" value="Bifunctional purine biosynthesis protein PurH"/>
    <property type="match status" value="1"/>
</dbReference>
<dbReference type="FunFam" id="3.40.140.20:FF:000002">
    <property type="entry name" value="Bifunctional purine biosynthesis protein PurH"/>
    <property type="match status" value="1"/>
</dbReference>
<dbReference type="FunFam" id="3.40.50.1380:FF:000001">
    <property type="entry name" value="Bifunctional purine biosynthesis protein PurH"/>
    <property type="match status" value="1"/>
</dbReference>
<dbReference type="Gene3D" id="3.40.140.20">
    <property type="match status" value="2"/>
</dbReference>
<dbReference type="Gene3D" id="3.40.50.1380">
    <property type="entry name" value="Methylglyoxal synthase-like domain"/>
    <property type="match status" value="1"/>
</dbReference>
<dbReference type="HAMAP" id="MF_00139">
    <property type="entry name" value="PurH"/>
    <property type="match status" value="1"/>
</dbReference>
<dbReference type="InterPro" id="IPR024051">
    <property type="entry name" value="AICAR_Tfase_dup_dom_sf"/>
</dbReference>
<dbReference type="InterPro" id="IPR016193">
    <property type="entry name" value="Cytidine_deaminase-like"/>
</dbReference>
<dbReference type="InterPro" id="IPR011607">
    <property type="entry name" value="MGS-like_dom"/>
</dbReference>
<dbReference type="InterPro" id="IPR036914">
    <property type="entry name" value="MGS-like_dom_sf"/>
</dbReference>
<dbReference type="InterPro" id="IPR002695">
    <property type="entry name" value="PurH-like"/>
</dbReference>
<dbReference type="NCBIfam" id="NF002049">
    <property type="entry name" value="PRK00881.1"/>
    <property type="match status" value="1"/>
</dbReference>
<dbReference type="NCBIfam" id="TIGR00355">
    <property type="entry name" value="purH"/>
    <property type="match status" value="1"/>
</dbReference>
<dbReference type="PANTHER" id="PTHR11692:SF0">
    <property type="entry name" value="BIFUNCTIONAL PURINE BIOSYNTHESIS PROTEIN ATIC"/>
    <property type="match status" value="1"/>
</dbReference>
<dbReference type="PANTHER" id="PTHR11692">
    <property type="entry name" value="BIFUNCTIONAL PURINE BIOSYNTHESIS PROTEIN PURH"/>
    <property type="match status" value="1"/>
</dbReference>
<dbReference type="Pfam" id="PF01808">
    <property type="entry name" value="AICARFT_IMPCHas"/>
    <property type="match status" value="1"/>
</dbReference>
<dbReference type="Pfam" id="PF02142">
    <property type="entry name" value="MGS"/>
    <property type="match status" value="1"/>
</dbReference>
<dbReference type="PIRSF" id="PIRSF000414">
    <property type="entry name" value="AICARFT_IMPCHas"/>
    <property type="match status" value="1"/>
</dbReference>
<dbReference type="SMART" id="SM00798">
    <property type="entry name" value="AICARFT_IMPCHas"/>
    <property type="match status" value="1"/>
</dbReference>
<dbReference type="SMART" id="SM00851">
    <property type="entry name" value="MGS"/>
    <property type="match status" value="1"/>
</dbReference>
<dbReference type="SUPFAM" id="SSF53927">
    <property type="entry name" value="Cytidine deaminase-like"/>
    <property type="match status" value="1"/>
</dbReference>
<dbReference type="SUPFAM" id="SSF52335">
    <property type="entry name" value="Methylglyoxal synthase-like"/>
    <property type="match status" value="1"/>
</dbReference>
<dbReference type="PROSITE" id="PS51855">
    <property type="entry name" value="MGS"/>
    <property type="match status" value="1"/>
</dbReference>
<proteinExistence type="inferred from homology"/>
<gene>
    <name evidence="1" type="primary">purH</name>
    <name type="ordered locus">SSU98_0034</name>
</gene>
<sequence>MTKRALISVSDKNGIVEFAQELTKLGWEIISTGGTKVALDNAGVATIAIDDVTGFPEMMDGRVKTLHPNIHGGLLARRDVDSHLQAAKDHEIGLIDLVVVNLYPFKETILRPDVTYDLAVENIDIGGPSMLRSAAKNHASVTVVVDPADYPTVLGEIAEQGQTTYPTRQRLAAKVFRHTAAYDALIADYFTKQVGEDKPEKLTITYDLNQPMRYGENPQQNADFYQNALPTDYSIAAAKQLNGKELSFNNIRDADAAIRIIRDFKDRPTVVALKHMNPCGIGQAETIEKAWDYAYEADPVSIFGGIVVLNREVDAATAEKMHPIFLEIIIAPSYSAEALAILTNKKKNLRILELAFDAQDASEVEKEFTGVVGGLLVQDQDVVVESPADWQVVTERQPSEQEWAAMEFAWKSSKYVKSNGIIITNDKMTLGVGPGQTNRVASVRIAIEQAKDRLEGAVLASDAFFPFADNVEEIAAAGIKAIIQPGGSVRDQDSIDMANKYGLTMVFTGVRHFRH</sequence>
<evidence type="ECO:0000255" key="1">
    <source>
        <dbReference type="HAMAP-Rule" id="MF_00139"/>
    </source>
</evidence>
<evidence type="ECO:0000255" key="2">
    <source>
        <dbReference type="PROSITE-ProRule" id="PRU01202"/>
    </source>
</evidence>
<accession>A4VYK5</accession>
<protein>
    <recommendedName>
        <fullName evidence="1">Bifunctional purine biosynthesis protein PurH</fullName>
    </recommendedName>
    <domain>
        <recommendedName>
            <fullName evidence="1">Phosphoribosylaminoimidazolecarboxamide formyltransferase</fullName>
            <ecNumber evidence="1">2.1.2.3</ecNumber>
        </recommendedName>
        <alternativeName>
            <fullName evidence="1">AICAR transformylase</fullName>
        </alternativeName>
    </domain>
    <domain>
        <recommendedName>
            <fullName evidence="1">IMP cyclohydrolase</fullName>
            <ecNumber evidence="1">3.5.4.10</ecNumber>
        </recommendedName>
        <alternativeName>
            <fullName evidence="1">ATIC</fullName>
        </alternativeName>
        <alternativeName>
            <fullName evidence="1">IMP synthase</fullName>
        </alternativeName>
        <alternativeName>
            <fullName evidence="1">Inosinicase</fullName>
        </alternativeName>
    </domain>
</protein>
<reference key="1">
    <citation type="journal article" date="2007" name="PLoS ONE">
        <title>A glimpse of streptococcal toxic shock syndrome from comparative genomics of S. suis 2 Chinese isolates.</title>
        <authorList>
            <person name="Chen C."/>
            <person name="Tang J."/>
            <person name="Dong W."/>
            <person name="Wang C."/>
            <person name="Feng Y."/>
            <person name="Wang J."/>
            <person name="Zheng F."/>
            <person name="Pan X."/>
            <person name="Liu D."/>
            <person name="Li M."/>
            <person name="Song Y."/>
            <person name="Zhu X."/>
            <person name="Sun H."/>
            <person name="Feng T."/>
            <person name="Guo Z."/>
            <person name="Ju A."/>
            <person name="Ge J."/>
            <person name="Dong Y."/>
            <person name="Sun W."/>
            <person name="Jiang Y."/>
            <person name="Wang J."/>
            <person name="Yan J."/>
            <person name="Yang H."/>
            <person name="Wang X."/>
            <person name="Gao G.F."/>
            <person name="Yang R."/>
            <person name="Wang J."/>
            <person name="Yu J."/>
        </authorList>
    </citation>
    <scope>NUCLEOTIDE SEQUENCE [LARGE SCALE GENOMIC DNA]</scope>
    <source>
        <strain>98HAH33</strain>
    </source>
</reference>
<keyword id="KW-0378">Hydrolase</keyword>
<keyword id="KW-0511">Multifunctional enzyme</keyword>
<keyword id="KW-0658">Purine biosynthesis</keyword>
<keyword id="KW-0808">Transferase</keyword>
<comment type="catalytic activity">
    <reaction evidence="1">
        <text>(6R)-10-formyltetrahydrofolate + 5-amino-1-(5-phospho-beta-D-ribosyl)imidazole-4-carboxamide = 5-formamido-1-(5-phospho-D-ribosyl)imidazole-4-carboxamide + (6S)-5,6,7,8-tetrahydrofolate</text>
        <dbReference type="Rhea" id="RHEA:22192"/>
        <dbReference type="ChEBI" id="CHEBI:57453"/>
        <dbReference type="ChEBI" id="CHEBI:58467"/>
        <dbReference type="ChEBI" id="CHEBI:58475"/>
        <dbReference type="ChEBI" id="CHEBI:195366"/>
        <dbReference type="EC" id="2.1.2.3"/>
    </reaction>
</comment>
<comment type="catalytic activity">
    <reaction evidence="1">
        <text>IMP + H2O = 5-formamido-1-(5-phospho-D-ribosyl)imidazole-4-carboxamide</text>
        <dbReference type="Rhea" id="RHEA:18445"/>
        <dbReference type="ChEBI" id="CHEBI:15377"/>
        <dbReference type="ChEBI" id="CHEBI:58053"/>
        <dbReference type="ChEBI" id="CHEBI:58467"/>
        <dbReference type="EC" id="3.5.4.10"/>
    </reaction>
</comment>
<comment type="pathway">
    <text evidence="1">Purine metabolism; IMP biosynthesis via de novo pathway; 5-formamido-1-(5-phospho-D-ribosyl)imidazole-4-carboxamide from 5-amino-1-(5-phospho-D-ribosyl)imidazole-4-carboxamide (10-formyl THF route): step 1/1.</text>
</comment>
<comment type="pathway">
    <text evidence="1">Purine metabolism; IMP biosynthesis via de novo pathway; IMP from 5-formamido-1-(5-phospho-D-ribosyl)imidazole-4-carboxamide: step 1/1.</text>
</comment>
<comment type="domain">
    <text evidence="1">The IMP cyclohydrolase activity resides in the N-terminal region.</text>
</comment>
<comment type="similarity">
    <text evidence="1">Belongs to the PurH family.</text>
</comment>
<feature type="chain" id="PRO_1000018973" description="Bifunctional purine biosynthesis protein PurH">
    <location>
        <begin position="1"/>
        <end position="515"/>
    </location>
</feature>
<feature type="domain" description="MGS-like" evidence="2">
    <location>
        <begin position="1"/>
        <end position="145"/>
    </location>
</feature>
<name>PUR9_STRS2</name>
<organism>
    <name type="scientific">Streptococcus suis (strain 98HAH33)</name>
    <dbReference type="NCBI Taxonomy" id="391296"/>
    <lineage>
        <taxon>Bacteria</taxon>
        <taxon>Bacillati</taxon>
        <taxon>Bacillota</taxon>
        <taxon>Bacilli</taxon>
        <taxon>Lactobacillales</taxon>
        <taxon>Streptococcaceae</taxon>
        <taxon>Streptococcus</taxon>
    </lineage>
</organism>